<name>MUG30_SCHPO</name>
<keyword id="KW-0963">Cytoplasm</keyword>
<keyword id="KW-0206">Cytoskeleton</keyword>
<keyword id="KW-0469">Meiosis</keyword>
<keyword id="KW-1185">Reference proteome</keyword>
<keyword id="KW-0808">Transferase</keyword>
<keyword id="KW-0833">Ubl conjugation pathway</keyword>
<organism>
    <name type="scientific">Schizosaccharomyces pombe (strain 972 / ATCC 24843)</name>
    <name type="common">Fission yeast</name>
    <dbReference type="NCBI Taxonomy" id="284812"/>
    <lineage>
        <taxon>Eukaryota</taxon>
        <taxon>Fungi</taxon>
        <taxon>Dikarya</taxon>
        <taxon>Ascomycota</taxon>
        <taxon>Taphrinomycotina</taxon>
        <taxon>Schizosaccharomycetes</taxon>
        <taxon>Schizosaccharomycetales</taxon>
        <taxon>Schizosaccharomycetaceae</taxon>
        <taxon>Schizosaccharomyces</taxon>
    </lineage>
</organism>
<comment type="function">
    <text evidence="2">Probable E3 ubiquitin-protein ligase. Has a role in meiosis.</text>
</comment>
<comment type="catalytic activity">
    <reaction>
        <text>S-ubiquitinyl-[E2 ubiquitin-conjugating enzyme]-L-cysteine + [acceptor protein]-L-lysine = [E2 ubiquitin-conjugating enzyme]-L-cysteine + N(6)-ubiquitinyl-[acceptor protein]-L-lysine.</text>
        <dbReference type="EC" id="2.3.2.26"/>
    </reaction>
</comment>
<comment type="pathway">
    <text>Protein modification; protein ubiquitination.</text>
</comment>
<comment type="subcellular location">
    <subcellularLocation>
        <location evidence="3">Cytoplasm</location>
        <location evidence="3">Cytoskeleton</location>
        <location evidence="3">Microtubule organizing center</location>
        <location evidence="3">Spindle pole body</location>
    </subcellularLocation>
    <text>Localizes to the barrier septum and the cell tip.</text>
</comment>
<reference key="1">
    <citation type="journal article" date="2002" name="Nature">
        <title>The genome sequence of Schizosaccharomyces pombe.</title>
        <authorList>
            <person name="Wood V."/>
            <person name="Gwilliam R."/>
            <person name="Rajandream M.A."/>
            <person name="Lyne M.H."/>
            <person name="Lyne R."/>
            <person name="Stewart A."/>
            <person name="Sgouros J.G."/>
            <person name="Peat N."/>
            <person name="Hayles J."/>
            <person name="Baker S.G."/>
            <person name="Basham D."/>
            <person name="Bowman S."/>
            <person name="Brooks K."/>
            <person name="Brown D."/>
            <person name="Brown S."/>
            <person name="Chillingworth T."/>
            <person name="Churcher C.M."/>
            <person name="Collins M."/>
            <person name="Connor R."/>
            <person name="Cronin A."/>
            <person name="Davis P."/>
            <person name="Feltwell T."/>
            <person name="Fraser A."/>
            <person name="Gentles S."/>
            <person name="Goble A."/>
            <person name="Hamlin N."/>
            <person name="Harris D.E."/>
            <person name="Hidalgo J."/>
            <person name="Hodgson G."/>
            <person name="Holroyd S."/>
            <person name="Hornsby T."/>
            <person name="Howarth S."/>
            <person name="Huckle E.J."/>
            <person name="Hunt S."/>
            <person name="Jagels K."/>
            <person name="James K.D."/>
            <person name="Jones L."/>
            <person name="Jones M."/>
            <person name="Leather S."/>
            <person name="McDonald S."/>
            <person name="McLean J."/>
            <person name="Mooney P."/>
            <person name="Moule S."/>
            <person name="Mungall K.L."/>
            <person name="Murphy L.D."/>
            <person name="Niblett D."/>
            <person name="Odell C."/>
            <person name="Oliver K."/>
            <person name="O'Neil S."/>
            <person name="Pearson D."/>
            <person name="Quail M.A."/>
            <person name="Rabbinowitsch E."/>
            <person name="Rutherford K.M."/>
            <person name="Rutter S."/>
            <person name="Saunders D."/>
            <person name="Seeger K."/>
            <person name="Sharp S."/>
            <person name="Skelton J."/>
            <person name="Simmonds M.N."/>
            <person name="Squares R."/>
            <person name="Squares S."/>
            <person name="Stevens K."/>
            <person name="Taylor K."/>
            <person name="Taylor R.G."/>
            <person name="Tivey A."/>
            <person name="Walsh S.V."/>
            <person name="Warren T."/>
            <person name="Whitehead S."/>
            <person name="Woodward J.R."/>
            <person name="Volckaert G."/>
            <person name="Aert R."/>
            <person name="Robben J."/>
            <person name="Grymonprez B."/>
            <person name="Weltjens I."/>
            <person name="Vanstreels E."/>
            <person name="Rieger M."/>
            <person name="Schaefer M."/>
            <person name="Mueller-Auer S."/>
            <person name="Gabel C."/>
            <person name="Fuchs M."/>
            <person name="Duesterhoeft A."/>
            <person name="Fritzc C."/>
            <person name="Holzer E."/>
            <person name="Moestl D."/>
            <person name="Hilbert H."/>
            <person name="Borzym K."/>
            <person name="Langer I."/>
            <person name="Beck A."/>
            <person name="Lehrach H."/>
            <person name="Reinhardt R."/>
            <person name="Pohl T.M."/>
            <person name="Eger P."/>
            <person name="Zimmermann W."/>
            <person name="Wedler H."/>
            <person name="Wambutt R."/>
            <person name="Purnelle B."/>
            <person name="Goffeau A."/>
            <person name="Cadieu E."/>
            <person name="Dreano S."/>
            <person name="Gloux S."/>
            <person name="Lelaure V."/>
            <person name="Mottier S."/>
            <person name="Galibert F."/>
            <person name="Aves S.J."/>
            <person name="Xiang Z."/>
            <person name="Hunt C."/>
            <person name="Moore K."/>
            <person name="Hurst S.M."/>
            <person name="Lucas M."/>
            <person name="Rochet M."/>
            <person name="Gaillardin C."/>
            <person name="Tallada V.A."/>
            <person name="Garzon A."/>
            <person name="Thode G."/>
            <person name="Daga R.R."/>
            <person name="Cruzado L."/>
            <person name="Jimenez J."/>
            <person name="Sanchez M."/>
            <person name="del Rey F."/>
            <person name="Benito J."/>
            <person name="Dominguez A."/>
            <person name="Revuelta J.L."/>
            <person name="Moreno S."/>
            <person name="Armstrong J."/>
            <person name="Forsburg S.L."/>
            <person name="Cerutti L."/>
            <person name="Lowe T."/>
            <person name="McCombie W.R."/>
            <person name="Paulsen I."/>
            <person name="Potashkin J."/>
            <person name="Shpakovski G.V."/>
            <person name="Ussery D."/>
            <person name="Barrell B.G."/>
            <person name="Nurse P."/>
        </authorList>
    </citation>
    <scope>NUCLEOTIDE SEQUENCE [LARGE SCALE GENOMIC DNA]</scope>
    <source>
        <strain>972 / ATCC 24843</strain>
    </source>
</reference>
<reference key="2">
    <citation type="journal article" date="2005" name="Curr. Biol.">
        <title>A large-scale screen in S. pombe identifies seven novel genes required for critical meiotic events.</title>
        <authorList>
            <person name="Martin-Castellanos C."/>
            <person name="Blanco M."/>
            <person name="Rozalen A.E."/>
            <person name="Perez-Hidalgo L."/>
            <person name="Garcia A.I."/>
            <person name="Conde F."/>
            <person name="Mata J."/>
            <person name="Ellermeier C."/>
            <person name="Davis L."/>
            <person name="San-Segundo P."/>
            <person name="Smith G.R."/>
            <person name="Moreno S."/>
        </authorList>
    </citation>
    <scope>FUNCTION IN MEIOSIS</scope>
</reference>
<reference key="3">
    <citation type="journal article" date="2006" name="Nat. Biotechnol.">
        <title>ORFeome cloning and global analysis of protein localization in the fission yeast Schizosaccharomyces pombe.</title>
        <authorList>
            <person name="Matsuyama A."/>
            <person name="Arai R."/>
            <person name="Yashiroda Y."/>
            <person name="Shirai A."/>
            <person name="Kamata A."/>
            <person name="Sekido S."/>
            <person name="Kobayashi Y."/>
            <person name="Hashimoto A."/>
            <person name="Hamamoto M."/>
            <person name="Hiraoka Y."/>
            <person name="Horinouchi S."/>
            <person name="Yoshida M."/>
        </authorList>
    </citation>
    <scope>SUBCELLULAR LOCATION [LARGE SCALE ANALYSIS]</scope>
</reference>
<proteinExistence type="evidence at protein level"/>
<sequence length="807" mass="93415">MSRPIEIANVSSGNRRTLPALHGSSFSSRSELDNNTNSKISRRLRELVCQRMGENPLRLRQSFHETISNDSYGNSEKLVIRPCICCNSVLRYPAQAMCFRCSLCMTVNDVYFCLSGSQIKTKASTDGSQFISVEHFVETIHQTRSALQLAKQRTGNVQAIVAAGLPLRELISLVFGSPPILNKLFSVKNGCSIQSSGLNYKLIYQLYHDITNLDILITNELLRAIESLLRRPMLYCHDPADYQYLLILLENPLLNSKSKNIVNKSSSILKRILGVLSNLNEKTHHFFISCFKKQPYNNPKFFRRKVDLINKFIGQRLMETYSRNKRKHYYNNDWQIKSAAITMALLYSANSQMRLIDRSSFYCIMADFINLYHDFELWEQKINCFCFCQYPFLLSMGAKISILQLDARRKMEIKAREAFFSSILSKMNVEPYLMIRVRRDRLLEDSLRQINDRNKDFRKALKVEFLGEEGIDAGGLKREWLLLLTRKVFSPEFGLFVNCEESSNYLWFNYSHRSKEIDYYHMSGILMGIAIHNSINLDVQMPRAFYKKLLQLPLSFNDLDDFQPSLYRGLKELLLFEGDVKNTYGLNFTINLKAVEGFRTVELKEGGSELSVDNENRKEYVLRYVDYLLNTTVKKQFSAFFDGFMKVCGGNAISLFQDNEISKLIRGSEEVIDWELLKNVCVYDFYDQNAISNSISESEPSMTASKYLCHSFVSKRKIILWFWDLISHYSLKMQKLFLIFVTGSDRIPATGAHNFQLRISVLGPDSDQLPISHTCFNHLCIWEYSSREKLKKKLDTALLETNGFNIR</sequence>
<feature type="chain" id="PRO_0000300502" description="Probable E3 ubiquitin-protein ligase mug30">
    <location>
        <begin position="1"/>
        <end position="807"/>
    </location>
</feature>
<feature type="domain" description="HECT" evidence="1">
    <location>
        <begin position="453"/>
        <end position="807"/>
    </location>
</feature>
<feature type="active site" description="Glycyl thioester intermediate" evidence="1">
    <location>
        <position position="775"/>
    </location>
</feature>
<dbReference type="EC" id="2.3.2.26"/>
<dbReference type="EMBL" id="CU329671">
    <property type="protein sequence ID" value="CAA21812.1"/>
    <property type="molecule type" value="Genomic_DNA"/>
</dbReference>
<dbReference type="PIR" id="T40821">
    <property type="entry name" value="T40821"/>
</dbReference>
<dbReference type="RefSeq" id="NP_596534.1">
    <property type="nucleotide sequence ID" value="NM_001022455.2"/>
</dbReference>
<dbReference type="SMR" id="O94275"/>
<dbReference type="BioGRID" id="277890">
    <property type="interactions" value="24"/>
</dbReference>
<dbReference type="FunCoup" id="O94275">
    <property type="interactions" value="70"/>
</dbReference>
<dbReference type="STRING" id="284812.O94275"/>
<dbReference type="PaxDb" id="4896-SPBP8B7.27.1"/>
<dbReference type="EnsemblFungi" id="SPBP8B7.27.1">
    <property type="protein sequence ID" value="SPBP8B7.27.1:pep"/>
    <property type="gene ID" value="SPBP8B7.27"/>
</dbReference>
<dbReference type="GeneID" id="2541379"/>
<dbReference type="KEGG" id="spo:2541379"/>
<dbReference type="PomBase" id="SPBP8B7.27">
    <property type="gene designation" value="mug30"/>
</dbReference>
<dbReference type="VEuPathDB" id="FungiDB:SPBP8B7.27"/>
<dbReference type="eggNOG" id="KOG0941">
    <property type="taxonomic scope" value="Eukaryota"/>
</dbReference>
<dbReference type="HOGENOM" id="CLU_002173_5_1_1"/>
<dbReference type="InParanoid" id="O94275"/>
<dbReference type="OMA" id="DLMSEYY"/>
<dbReference type="PhylomeDB" id="O94275"/>
<dbReference type="Reactome" id="R-SPO-983168">
    <property type="pathway name" value="Antigen processing: Ubiquitination &amp; Proteasome degradation"/>
</dbReference>
<dbReference type="UniPathway" id="UPA00143"/>
<dbReference type="PRO" id="PR:O94275"/>
<dbReference type="Proteomes" id="UP000002485">
    <property type="component" value="Chromosome II"/>
</dbReference>
<dbReference type="GO" id="GO:0032153">
    <property type="term" value="C:cell division site"/>
    <property type="evidence" value="ECO:0007005"/>
    <property type="project" value="PomBase"/>
</dbReference>
<dbReference type="GO" id="GO:0051286">
    <property type="term" value="C:cell tip"/>
    <property type="evidence" value="ECO:0007005"/>
    <property type="project" value="PomBase"/>
</dbReference>
<dbReference type="GO" id="GO:0005737">
    <property type="term" value="C:cytoplasm"/>
    <property type="evidence" value="ECO:0007669"/>
    <property type="project" value="UniProtKB-KW"/>
</dbReference>
<dbReference type="GO" id="GO:0044732">
    <property type="term" value="C:mitotic spindle pole body"/>
    <property type="evidence" value="ECO:0007005"/>
    <property type="project" value="PomBase"/>
</dbReference>
<dbReference type="GO" id="GO:0005634">
    <property type="term" value="C:nucleus"/>
    <property type="evidence" value="ECO:0007005"/>
    <property type="project" value="PomBase"/>
</dbReference>
<dbReference type="GO" id="GO:0061630">
    <property type="term" value="F:ubiquitin protein ligase activity"/>
    <property type="evidence" value="ECO:0000318"/>
    <property type="project" value="GO_Central"/>
</dbReference>
<dbReference type="GO" id="GO:0008270">
    <property type="term" value="F:zinc ion binding"/>
    <property type="evidence" value="ECO:0007669"/>
    <property type="project" value="InterPro"/>
</dbReference>
<dbReference type="GO" id="GO:0051321">
    <property type="term" value="P:meiotic cell cycle"/>
    <property type="evidence" value="ECO:0007669"/>
    <property type="project" value="UniProtKB-KW"/>
</dbReference>
<dbReference type="GO" id="GO:0000209">
    <property type="term" value="P:protein polyubiquitination"/>
    <property type="evidence" value="ECO:0007669"/>
    <property type="project" value="InterPro"/>
</dbReference>
<dbReference type="CDD" id="cd00078">
    <property type="entry name" value="HECTc"/>
    <property type="match status" value="1"/>
</dbReference>
<dbReference type="FunFam" id="3.30.2160.10:FF:000004">
    <property type="entry name" value="probable E3 ubiquitin-protein ligase HERC4 isoform X1"/>
    <property type="match status" value="1"/>
</dbReference>
<dbReference type="Gene3D" id="3.30.2160.10">
    <property type="entry name" value="Hect, E3 ligase catalytic domain"/>
    <property type="match status" value="1"/>
</dbReference>
<dbReference type="Gene3D" id="3.30.2410.10">
    <property type="entry name" value="Hect, E3 ligase catalytic domain"/>
    <property type="match status" value="1"/>
</dbReference>
<dbReference type="Gene3D" id="3.90.1750.10">
    <property type="entry name" value="Hect, E3 ligase catalytic domains"/>
    <property type="match status" value="1"/>
</dbReference>
<dbReference type="InterPro" id="IPR044611">
    <property type="entry name" value="E3A/B/C-like"/>
</dbReference>
<dbReference type="InterPro" id="IPR000569">
    <property type="entry name" value="HECT_dom"/>
</dbReference>
<dbReference type="InterPro" id="IPR035983">
    <property type="entry name" value="Hect_E3_ubiquitin_ligase"/>
</dbReference>
<dbReference type="InterPro" id="IPR001607">
    <property type="entry name" value="Znf_UBP"/>
</dbReference>
<dbReference type="PANTHER" id="PTHR45700:SF8">
    <property type="entry name" value="HECT-TYPE E3 UBIQUITIN TRANSFERASE"/>
    <property type="match status" value="1"/>
</dbReference>
<dbReference type="PANTHER" id="PTHR45700">
    <property type="entry name" value="UBIQUITIN-PROTEIN LIGASE E3C"/>
    <property type="match status" value="1"/>
</dbReference>
<dbReference type="Pfam" id="PF00632">
    <property type="entry name" value="HECT"/>
    <property type="match status" value="1"/>
</dbReference>
<dbReference type="SMART" id="SM00119">
    <property type="entry name" value="HECTc"/>
    <property type="match status" value="1"/>
</dbReference>
<dbReference type="SMART" id="SM00290">
    <property type="entry name" value="ZnF_UBP"/>
    <property type="match status" value="1"/>
</dbReference>
<dbReference type="SUPFAM" id="SSF56204">
    <property type="entry name" value="Hect, E3 ligase catalytic domain"/>
    <property type="match status" value="1"/>
</dbReference>
<dbReference type="PROSITE" id="PS50237">
    <property type="entry name" value="HECT"/>
    <property type="match status" value="1"/>
</dbReference>
<evidence type="ECO:0000255" key="1">
    <source>
        <dbReference type="PROSITE-ProRule" id="PRU00104"/>
    </source>
</evidence>
<evidence type="ECO:0000269" key="2">
    <source>
    </source>
</evidence>
<evidence type="ECO:0000269" key="3">
    <source>
    </source>
</evidence>
<gene>
    <name type="primary">mug30</name>
    <name type="ORF">SPBP8B7.27</name>
</gene>
<protein>
    <recommendedName>
        <fullName>Probable E3 ubiquitin-protein ligase mug30</fullName>
        <ecNumber>2.3.2.26</ecNumber>
    </recommendedName>
    <alternativeName>
        <fullName>HECT-type E3 ubiquitin transferase mug30</fullName>
    </alternativeName>
    <alternativeName>
        <fullName>Meiotically up-regulated gene 30 protein</fullName>
    </alternativeName>
</protein>
<accession>O94275</accession>